<dbReference type="EC" id="2.7.4.8" evidence="1"/>
<dbReference type="EMBL" id="CR925677">
    <property type="protein sequence ID" value="CAI28151.1"/>
    <property type="molecule type" value="Genomic_DNA"/>
</dbReference>
<dbReference type="RefSeq" id="WP_011155353.1">
    <property type="nucleotide sequence ID" value="NC_006831.1"/>
</dbReference>
<dbReference type="SMR" id="Q5FFZ9"/>
<dbReference type="GeneID" id="33057552"/>
<dbReference type="KEGG" id="erg:ERGA_CDS_06990"/>
<dbReference type="HOGENOM" id="CLU_001715_1_0_5"/>
<dbReference type="OrthoDB" id="9808150at2"/>
<dbReference type="Proteomes" id="UP000000533">
    <property type="component" value="Chromosome"/>
</dbReference>
<dbReference type="GO" id="GO:0005829">
    <property type="term" value="C:cytosol"/>
    <property type="evidence" value="ECO:0007669"/>
    <property type="project" value="TreeGrafter"/>
</dbReference>
<dbReference type="GO" id="GO:0005524">
    <property type="term" value="F:ATP binding"/>
    <property type="evidence" value="ECO:0007669"/>
    <property type="project" value="UniProtKB-UniRule"/>
</dbReference>
<dbReference type="GO" id="GO:0004385">
    <property type="term" value="F:guanylate kinase activity"/>
    <property type="evidence" value="ECO:0007669"/>
    <property type="project" value="UniProtKB-UniRule"/>
</dbReference>
<dbReference type="CDD" id="cd00071">
    <property type="entry name" value="GMPK"/>
    <property type="match status" value="1"/>
</dbReference>
<dbReference type="FunFam" id="3.30.63.10:FF:000002">
    <property type="entry name" value="Guanylate kinase 1"/>
    <property type="match status" value="1"/>
</dbReference>
<dbReference type="Gene3D" id="3.30.63.10">
    <property type="entry name" value="Guanylate Kinase phosphate binding domain"/>
    <property type="match status" value="1"/>
</dbReference>
<dbReference type="Gene3D" id="3.40.50.300">
    <property type="entry name" value="P-loop containing nucleotide triphosphate hydrolases"/>
    <property type="match status" value="1"/>
</dbReference>
<dbReference type="HAMAP" id="MF_00328">
    <property type="entry name" value="Guanylate_kinase"/>
    <property type="match status" value="1"/>
</dbReference>
<dbReference type="InterPro" id="IPR008145">
    <property type="entry name" value="GK/Ca_channel_bsu"/>
</dbReference>
<dbReference type="InterPro" id="IPR008144">
    <property type="entry name" value="Guanylate_kin-like_dom"/>
</dbReference>
<dbReference type="InterPro" id="IPR017665">
    <property type="entry name" value="Guanylate_kinase"/>
</dbReference>
<dbReference type="InterPro" id="IPR020590">
    <property type="entry name" value="Guanylate_kinase_CS"/>
</dbReference>
<dbReference type="InterPro" id="IPR027417">
    <property type="entry name" value="P-loop_NTPase"/>
</dbReference>
<dbReference type="NCBIfam" id="TIGR03263">
    <property type="entry name" value="guanyl_kin"/>
    <property type="match status" value="1"/>
</dbReference>
<dbReference type="PANTHER" id="PTHR23117:SF13">
    <property type="entry name" value="GUANYLATE KINASE"/>
    <property type="match status" value="1"/>
</dbReference>
<dbReference type="PANTHER" id="PTHR23117">
    <property type="entry name" value="GUANYLATE KINASE-RELATED"/>
    <property type="match status" value="1"/>
</dbReference>
<dbReference type="Pfam" id="PF00625">
    <property type="entry name" value="Guanylate_kin"/>
    <property type="match status" value="1"/>
</dbReference>
<dbReference type="SMART" id="SM00072">
    <property type="entry name" value="GuKc"/>
    <property type="match status" value="1"/>
</dbReference>
<dbReference type="SUPFAM" id="SSF52540">
    <property type="entry name" value="P-loop containing nucleoside triphosphate hydrolases"/>
    <property type="match status" value="1"/>
</dbReference>
<dbReference type="PROSITE" id="PS00856">
    <property type="entry name" value="GUANYLATE_KINASE_1"/>
    <property type="match status" value="1"/>
</dbReference>
<dbReference type="PROSITE" id="PS50052">
    <property type="entry name" value="GUANYLATE_KINASE_2"/>
    <property type="match status" value="1"/>
</dbReference>
<sequence>MNNNLKSRGIMLVMSSPSGGGKTTISQLLVNELQGEIIRSVSVTTREPRNEEVEGKDYFFVTEDEFHHLCNTNQMLEYAKVFGNYYGIPRRFVMDNINNGISILFSIDWQGAFKLIDIMSEHVVSVFILPPSMEELKRRLYNRSGESDMINQRLKEAAFEISHCYRYNYIIVNHNIEESVQQIKSIFIAEKLKTHRKMFLEQVVKSYYI</sequence>
<feature type="chain" id="PRO_0000266321" description="Guanylate kinase">
    <location>
        <begin position="1"/>
        <end position="209"/>
    </location>
</feature>
<feature type="domain" description="Guanylate kinase-like" evidence="1">
    <location>
        <begin position="9"/>
        <end position="188"/>
    </location>
</feature>
<feature type="binding site" evidence="1">
    <location>
        <begin position="16"/>
        <end position="23"/>
    </location>
    <ligand>
        <name>ATP</name>
        <dbReference type="ChEBI" id="CHEBI:30616"/>
    </ligand>
</feature>
<organism>
    <name type="scientific">Ehrlichia ruminantium (strain Gardel)</name>
    <dbReference type="NCBI Taxonomy" id="302409"/>
    <lineage>
        <taxon>Bacteria</taxon>
        <taxon>Pseudomonadati</taxon>
        <taxon>Pseudomonadota</taxon>
        <taxon>Alphaproteobacteria</taxon>
        <taxon>Rickettsiales</taxon>
        <taxon>Anaplasmataceae</taxon>
        <taxon>Ehrlichia</taxon>
    </lineage>
</organism>
<keyword id="KW-0067">ATP-binding</keyword>
<keyword id="KW-0963">Cytoplasm</keyword>
<keyword id="KW-0418">Kinase</keyword>
<keyword id="KW-0547">Nucleotide-binding</keyword>
<keyword id="KW-0808">Transferase</keyword>
<accession>Q5FFZ9</accession>
<comment type="function">
    <text evidence="1">Essential for recycling GMP and indirectly, cGMP.</text>
</comment>
<comment type="catalytic activity">
    <reaction evidence="1">
        <text>GMP + ATP = GDP + ADP</text>
        <dbReference type="Rhea" id="RHEA:20780"/>
        <dbReference type="ChEBI" id="CHEBI:30616"/>
        <dbReference type="ChEBI" id="CHEBI:58115"/>
        <dbReference type="ChEBI" id="CHEBI:58189"/>
        <dbReference type="ChEBI" id="CHEBI:456216"/>
        <dbReference type="EC" id="2.7.4.8"/>
    </reaction>
</comment>
<comment type="subcellular location">
    <subcellularLocation>
        <location evidence="1">Cytoplasm</location>
    </subcellularLocation>
</comment>
<comment type="similarity">
    <text evidence="1">Belongs to the guanylate kinase family.</text>
</comment>
<gene>
    <name evidence="1" type="primary">gmk</name>
    <name type="ordered locus">ERGA_CDS_06990</name>
</gene>
<evidence type="ECO:0000255" key="1">
    <source>
        <dbReference type="HAMAP-Rule" id="MF_00328"/>
    </source>
</evidence>
<proteinExistence type="inferred from homology"/>
<reference key="1">
    <citation type="journal article" date="2006" name="J. Bacteriol.">
        <title>Comparative genomic analysis of three strains of Ehrlichia ruminantium reveals an active process of genome size plasticity.</title>
        <authorList>
            <person name="Frutos R."/>
            <person name="Viari A."/>
            <person name="Ferraz C."/>
            <person name="Morgat A."/>
            <person name="Eychenie S."/>
            <person name="Kandassamy Y."/>
            <person name="Chantal I."/>
            <person name="Bensaid A."/>
            <person name="Coissac E."/>
            <person name="Vachiery N."/>
            <person name="Demaille J."/>
            <person name="Martinez D."/>
        </authorList>
    </citation>
    <scope>NUCLEOTIDE SEQUENCE [LARGE SCALE GENOMIC DNA]</scope>
    <source>
        <strain>Gardel</strain>
    </source>
</reference>
<name>KGUA_EHRRG</name>
<protein>
    <recommendedName>
        <fullName evidence="1">Guanylate kinase</fullName>
        <ecNumber evidence="1">2.7.4.8</ecNumber>
    </recommendedName>
    <alternativeName>
        <fullName evidence="1">GMP kinase</fullName>
    </alternativeName>
</protein>